<proteinExistence type="evidence at protein level"/>
<comment type="function">
    <text evidence="1 5 6 12">Transports trehalose monomycolate (TMM) to the cell wall. Flips TMM across the inner membrane (PubMed:22252828, PubMed:22344175). Membrane potential is not required for this function. Transports probably phosphatidylethanolamine (PE) as well. Binds specifically both TMM and PE, but not trehalose dimycolate (TDM). Also binds diacylglycerol (DAG) and other phospholipids, including phosphatidylglycerol (PG), phosphatidylinositol (PI), and cardiolipin (CDL). Contributes to membrane potential, cell wall composition, antibiotic susceptibility and fitness (By similarity). Could also be part of a heme-iron acquisition system (PubMed:21383189).</text>
</comment>
<comment type="function">
    <text evidence="5">Is the target of the antitubercular drug SQ109.</text>
</comment>
<comment type="activity regulation">
    <text evidence="4 5 6 7 8 9 10">Inhibited by the antitubercular drug SQ109. Also inhibited by several other compounds such as the pyrrole derivative BM212, the adamantyl urea derivative AU1235, the benzimidazole C215, indoleamides, tetrahydropyrazolo[1,5-a]pyrimidine-3-carboxamide (THPP) and N-benzyl-6',7'-dihydrospiro[piperidine-4,4'-thieno[3,2-c]pyran] (Spiro) analogs. Inhibitory effects of these compounds, including SQ109, are most likely due to their ability to dissipate the transmembrane electrochemical proton gradient.</text>
</comment>
<comment type="subunit">
    <text evidence="1">Monomer. Interacts with TtfA (via N-terminus); active trehalose monomycolate (TMM) biosynthesis is not required for the complex formation.</text>
</comment>
<comment type="subcellular location">
    <subcellularLocation>
        <location evidence="11">Cell inner membrane</location>
        <topology evidence="2">Multi-pass membrane protein</topology>
    </subcellularLocation>
    <subcellularLocation>
        <location evidence="1">Cell septum</location>
    </subcellularLocation>
    <subcellularLocation>
        <location evidence="1">Cell tip</location>
    </subcellularLocation>
    <text evidence="1">Colocalizes with TtfA to the cell poles and septa. Trehalose monomycolate (TMM) synthesis is not required for localization to the poles or septa.</text>
</comment>
<comment type="similarity">
    <text evidence="11">Belongs to the resistance-nodulation-cell division (RND) (TC 2.A.6) family. MmpL subfamily.</text>
</comment>
<sequence>MFAWWGRTVYRYRFIVIGVMVALCLGGGVFGLSLGKHVTQSGFYDDGSQSVQASVLGDQVYGRDRSGHIVAIFQAPAGKTVDDPAWSKKVVDELNRFQQDHPDQVLGWAGYLRASQATGMATADKKYTFVSIPLKGDDDDTILNNYKAIAPDLQRLDGGTVKLAGLQPVAEALTGTIATDQRRMEVLALPLVAVVLFFVFGGVIAAGLPVMVGGLCIAGALGIMRFLAIFGPVHYFAQPVVSLIGLGIAIDYGLFIVSRFREEIAEGYDTETAVRRTVITAGRTVTFSAVLIVASAIGLLLFPQGFLKSLTYATIASVMLSAILSITVLPACLGILGKHVDALGVRTLFRVPFLANWKISAAYLNWLADRLQRTKTREEVEAGFWGKLVNRVMKRPVLFAAPIVIIMILLIIPVGKLSLGGISEKYLPPTNSVRQAQEEFDKLFPGYRTNPLTLVIQTSNHQPVTDAQIADIRSKAMAIGGFIEPDNDPANMWQERAYAVGASKDPSVRVLQNGLINPADASKKLTELRAITPPKGITVLVGGTPALELDSIHGLFAKMPLMVVILLTTTIVLMFLAFGSVVLPIKATLMSALTLGSTMGILTWIFVDGHFSKWLNFTPTPLTAPVIGLIIALVFGLSTDYEVFLVSRMVEARERGMSTQEAIRIGTAATGRIITAAALIVAVVAGAFVFSDLVMMKYLAFGLMAALLLDATVVRMFLVPSVMKLLGDDCWWAPRWARRLQTRIGLGEIHLPDERKRPVSNGRPARPPVTAGLVAARAAGDPRPPHDPTHPLAESPRPARSSPASSPELTPALEATAAPAAPSGASTTRMQIGSSTEPPTTRLAAAGRSVQSPASTPPPTPTPPSAPSAGQTRAMPLAANRSTDAAGDPAEPTAALPIIRSDGDDSEAATEQLNARGTSDKTRQRRRGGGALSAQDLLRREGRL</sequence>
<protein>
    <recommendedName>
        <fullName evidence="11">Trehalose monomycolate exporter MmpL3</fullName>
        <shortName evidence="11">TMM exporter MmpL3</shortName>
    </recommendedName>
    <alternativeName>
        <fullName evidence="11">MmpL3 transporter</fullName>
    </alternativeName>
    <alternativeName>
        <fullName evidence="11">Mycobacterial membrane protein large 3</fullName>
    </alternativeName>
</protein>
<reference key="1">
    <citation type="journal article" date="1998" name="Nature">
        <title>Deciphering the biology of Mycobacterium tuberculosis from the complete genome sequence.</title>
        <authorList>
            <person name="Cole S.T."/>
            <person name="Brosch R."/>
            <person name="Parkhill J."/>
            <person name="Garnier T."/>
            <person name="Churcher C.M."/>
            <person name="Harris D.E."/>
            <person name="Gordon S.V."/>
            <person name="Eiglmeier K."/>
            <person name="Gas S."/>
            <person name="Barry C.E. III"/>
            <person name="Tekaia F."/>
            <person name="Badcock K."/>
            <person name="Basham D."/>
            <person name="Brown D."/>
            <person name="Chillingworth T."/>
            <person name="Connor R."/>
            <person name="Davies R.M."/>
            <person name="Devlin K."/>
            <person name="Feltwell T."/>
            <person name="Gentles S."/>
            <person name="Hamlin N."/>
            <person name="Holroyd S."/>
            <person name="Hornsby T."/>
            <person name="Jagels K."/>
            <person name="Krogh A."/>
            <person name="McLean J."/>
            <person name="Moule S."/>
            <person name="Murphy L.D."/>
            <person name="Oliver S."/>
            <person name="Osborne J."/>
            <person name="Quail M.A."/>
            <person name="Rajandream M.A."/>
            <person name="Rogers J."/>
            <person name="Rutter S."/>
            <person name="Seeger K."/>
            <person name="Skelton S."/>
            <person name="Squares S."/>
            <person name="Squares R."/>
            <person name="Sulston J.E."/>
            <person name="Taylor K."/>
            <person name="Whitehead S."/>
            <person name="Barrell B.G."/>
        </authorList>
    </citation>
    <scope>NUCLEOTIDE SEQUENCE [LARGE SCALE GENOMIC DNA]</scope>
    <source>
        <strain>ATCC 25618 / H37Rv</strain>
    </source>
</reference>
<reference key="2">
    <citation type="journal article" date="2011" name="Mol. Cell. Proteomics">
        <title>Proteogenomic analysis of Mycobacterium tuberculosis by high resolution mass spectrometry.</title>
        <authorList>
            <person name="Kelkar D.S."/>
            <person name="Kumar D."/>
            <person name="Kumar P."/>
            <person name="Balakrishnan L."/>
            <person name="Muthusamy B."/>
            <person name="Yadav A.K."/>
            <person name="Shrivastava P."/>
            <person name="Marimuthu A."/>
            <person name="Anand S."/>
            <person name="Sundaram H."/>
            <person name="Kingsbury R."/>
            <person name="Harsha H.C."/>
            <person name="Nair B."/>
            <person name="Prasad T.S."/>
            <person name="Chauhan D.S."/>
            <person name="Katoch K."/>
            <person name="Katoch V.M."/>
            <person name="Kumar P."/>
            <person name="Chaerkady R."/>
            <person name="Ramachandran S."/>
            <person name="Dash D."/>
            <person name="Pandey A."/>
        </authorList>
    </citation>
    <scope>IDENTIFICATION BY MASS SPECTROMETRY [LARGE SCALE ANALYSIS]</scope>
    <source>
        <strain>ATCC 25618 / H37Rv</strain>
    </source>
</reference>
<reference key="3">
    <citation type="journal article" date="2011" name="Proc. Natl. Acad. Sci. U.S.A.">
        <title>Discovery and characterization of a unique mycobacterial heme acquisition system.</title>
        <authorList>
            <person name="Tullius M.V."/>
            <person name="Harmston C.A."/>
            <person name="Owens C.P."/>
            <person name="Chim N."/>
            <person name="Morse R.P."/>
            <person name="McMath L.M."/>
            <person name="Iniguez A."/>
            <person name="Kimmey J.M."/>
            <person name="Sawaya M.R."/>
            <person name="Whitelegge J.P."/>
            <person name="Horwitz M.A."/>
            <person name="Goulding C.W."/>
        </authorList>
    </citation>
    <scope>PUTATIVE FUNCTION IN HEME IMPORT</scope>
    <scope>HEME BINDING</scope>
</reference>
<reference key="4">
    <citation type="journal article" date="2012" name="ACS Chem. Biol.">
        <title>Identification of novel inhibitors of M. tuberculosis growth using whole cell based high-throughput screening.</title>
        <authorList>
            <person name="Stanley S.A."/>
            <person name="Grant S.S."/>
            <person name="Kawate T."/>
            <person name="Iwase N."/>
            <person name="Shimizu M."/>
            <person name="Wivagg C."/>
            <person name="Silvis M."/>
            <person name="Kazyanskaya E."/>
            <person name="Aquadro J."/>
            <person name="Golas A."/>
            <person name="Fitzgerald M."/>
            <person name="Dai H."/>
            <person name="Zhang L."/>
            <person name="Hung D.T."/>
        </authorList>
    </citation>
    <scope>ACTIVITY REGULATION</scope>
    <scope>MUTAGENESIS OF VAL-51; LEU-320; THR-667 AND VAL-684</scope>
</reference>
<reference key="5">
    <citation type="journal article" date="2012" name="Antimicrob. Agents Chemother.">
        <title>MmpL3 is the cellular target of the antitubercular pyrrole derivative BM212.</title>
        <authorList>
            <person name="La Rosa V."/>
            <person name="Poce G."/>
            <person name="Canseco J.O."/>
            <person name="Buroni S."/>
            <person name="Pasca M.R."/>
            <person name="Biava M."/>
            <person name="Raju R.M."/>
            <person name="Porretta G.C."/>
            <person name="Alfonso S."/>
            <person name="Battilocchio C."/>
            <person name="Javid B."/>
            <person name="Sorrentino F."/>
            <person name="Ioerger T.R."/>
            <person name="Sacchettini J.C."/>
            <person name="Manetti F."/>
            <person name="Botta M."/>
            <person name="De Logu A."/>
            <person name="Rubin E.J."/>
            <person name="De Rossi E."/>
        </authorList>
    </citation>
    <scope>ACTIVITY REGULATION</scope>
    <scope>MUTAGENESIS OF LEU-215</scope>
    <source>
        <strain>H37Rv</strain>
    </source>
</reference>
<reference key="6">
    <citation type="journal article" date="2012" name="Antimicrob. Agents Chemother.">
        <title>SQ109 targets MmpL3, a membrane transporter of trehalose monomycolate involved in mycolic acid donation to the cell wall core of Mycobacterium tuberculosis.</title>
        <authorList>
            <person name="Tahlan K."/>
            <person name="Wilson R."/>
            <person name="Kastrinsky D.B."/>
            <person name="Arora K."/>
            <person name="Nair V."/>
            <person name="Fischer E."/>
            <person name="Barnes S.W."/>
            <person name="Walker J.R."/>
            <person name="Alland D."/>
            <person name="Barry C.E. III"/>
            <person name="Boshoff H.I."/>
        </authorList>
    </citation>
    <scope>FUNCTION</scope>
    <scope>IDENTIFICATION AS A DRUG TARGET</scope>
    <scope>ACTIVITY REGULATION</scope>
    <scope>MUTAGENESIS OF GLN-40; LEU-567 AND ALA-700</scope>
    <source>
        <strain>H37Rv</strain>
    </source>
</reference>
<reference key="7">
    <citation type="journal article" date="2012" name="Nat. Chem. Biol.">
        <title>Inhibition of mycolic acid transport across the Mycobacterium tuberculosis plasma membrane.</title>
        <authorList>
            <person name="Grzegorzewicz A.E."/>
            <person name="Pham H."/>
            <person name="Gundi V.A."/>
            <person name="Scherman M.S."/>
            <person name="North E.J."/>
            <person name="Hess T."/>
            <person name="Jones V."/>
            <person name="Gruppo V."/>
            <person name="Born S.E."/>
            <person name="Kordulakova J."/>
            <person name="Chavadi S.S."/>
            <person name="Morisseau C."/>
            <person name="Lenaerts A.J."/>
            <person name="Lee R.E."/>
            <person name="McNeil M.R."/>
            <person name="Jackson M."/>
        </authorList>
    </citation>
    <scope>FUNCTION</scope>
    <scope>ACTIVITY REGULATION</scope>
    <scope>MUTAGENESIS OF GLY-253</scope>
    <source>
        <strain>H37Rv</strain>
    </source>
</reference>
<reference key="8">
    <citation type="journal article" date="2013" name="Nat. Commun.">
        <title>Indoleamides are active against drug-resistant Mycobacterium tuberculosis.</title>
        <authorList>
            <person name="Lun S."/>
            <person name="Guo H."/>
            <person name="Onajole O.K."/>
            <person name="Pieroni M."/>
            <person name="Gunosewoyo H."/>
            <person name="Chen G."/>
            <person name="Tipparaju S.K."/>
            <person name="Ammerman N.C."/>
            <person name="Kozikowski A.P."/>
            <person name="Bishai W.R."/>
        </authorList>
    </citation>
    <scope>ACTIVITY REGULATION</scope>
    <scope>MUTAGENESIS OF SER-288</scope>
</reference>
<reference key="9">
    <citation type="journal article" date="2013" name="PLoS ONE">
        <title>Tetrahydropyrazolo[1,5-a]pyrimidine-3-carboxamide and N-benzyl-6',7'-dihydrospiro[piperidine-4,4'-thieno[3,2-c]pyran] analogues with bactericidal efficacy against Mycobacterium tuberculosis targeting MmpL3.</title>
        <authorList>
            <person name="Remuinan M.J."/>
            <person name="Perez-Herran E."/>
            <person name="Rullas J."/>
            <person name="Alemparte C."/>
            <person name="Martinez-Hoyos M."/>
            <person name="Dow D.J."/>
            <person name="Afari J."/>
            <person name="Mehta N."/>
            <person name="Esquivias J."/>
            <person name="Jimenez E."/>
            <person name="Ortega-Muro F."/>
            <person name="Fraile-Gabaldon M.T."/>
            <person name="Spivey V.L."/>
            <person name="Loman N.J."/>
            <person name="Pallen M.J."/>
            <person name="Constantinidou C."/>
            <person name="Minick D.J."/>
            <person name="Cacho M."/>
            <person name="Rebollo-Lopez M.J."/>
            <person name="Gonzalez C."/>
            <person name="Sousa V."/>
            <person name="Angulo-Barturen I."/>
            <person name="Mendoza-Losana A."/>
            <person name="Barros D."/>
            <person name="Besra G.S."/>
            <person name="Ballell L."/>
            <person name="Cammack N."/>
        </authorList>
    </citation>
    <scope>ACTIVITY REGULATION</scope>
</reference>
<reference key="10">
    <citation type="journal article" date="2014" name="Antimicrob. Agents Chemother.">
        <title>Novel insights into the mechanism of inhibition of MmpL3, a target of multiple pharmacophores in Mycobacterium tuberculosis.</title>
        <authorList>
            <person name="Li W."/>
            <person name="Upadhyay A."/>
            <person name="Fontes F.L."/>
            <person name="North E.J."/>
            <person name="Wang Y."/>
            <person name="Crans D.C."/>
            <person name="Grzegorzewicz A.E."/>
            <person name="Jones V."/>
            <person name="Franzblau S.G."/>
            <person name="Lee R.E."/>
            <person name="Crick D.C."/>
            <person name="Jackson M."/>
        </authorList>
    </citation>
    <scope>ACTIVITY REGULATION</scope>
    <scope>MECHANISM OF INHIBITION</scope>
</reference>
<reference key="11">
    <citation type="journal article" date="2014" name="Expert Opin. Ther. Targets">
        <title>MmpL3 a potential new target for development of novel anti-tuberculosis drugs.</title>
        <authorList>
            <person name="Rayasam G.V."/>
        </authorList>
    </citation>
    <scope>REVIEW</scope>
</reference>
<gene>
    <name type="primary">mmpL3</name>
    <name type="ordered locus">Rv0206c</name>
    <name type="ORF">MTCY08D5.01c</name>
    <name type="ORF">MTV033.14c</name>
</gene>
<keyword id="KW-0002">3D-structure</keyword>
<keyword id="KW-0997">Cell inner membrane</keyword>
<keyword id="KW-1003">Cell membrane</keyword>
<keyword id="KW-0961">Cell wall biogenesis/degradation</keyword>
<keyword id="KW-0445">Lipid transport</keyword>
<keyword id="KW-0472">Membrane</keyword>
<keyword id="KW-1185">Reference proteome</keyword>
<keyword id="KW-0812">Transmembrane</keyword>
<keyword id="KW-1133">Transmembrane helix</keyword>
<keyword id="KW-0813">Transport</keyword>
<name>MMPL3_MYCTU</name>
<feature type="chain" id="PRO_0000103564" description="Trehalose monomycolate exporter MmpL3">
    <location>
        <begin position="1"/>
        <end position="944"/>
    </location>
</feature>
<feature type="topological domain" description="Cytoplasmic" evidence="1">
    <location>
        <begin position="1"/>
        <end position="13"/>
    </location>
</feature>
<feature type="transmembrane region" description="Helical" evidence="2">
    <location>
        <begin position="14"/>
        <end position="34"/>
    </location>
</feature>
<feature type="topological domain" description="Periplasmic" evidence="1">
    <location>
        <begin position="35"/>
        <end position="185"/>
    </location>
</feature>
<feature type="transmembrane region" description="Helical" evidence="2">
    <location>
        <begin position="186"/>
        <end position="206"/>
    </location>
</feature>
<feature type="topological domain" description="Cytoplasmic" evidence="1">
    <location>
        <begin position="207"/>
        <end position="209"/>
    </location>
</feature>
<feature type="transmembrane region" description="Helical" evidence="2">
    <location>
        <begin position="210"/>
        <end position="230"/>
    </location>
</feature>
<feature type="topological domain" description="Periplasmic" evidence="1">
    <location>
        <begin position="231"/>
        <end position="235"/>
    </location>
</feature>
<feature type="transmembrane region" description="Helical" evidence="2">
    <location>
        <begin position="236"/>
        <end position="256"/>
    </location>
</feature>
<feature type="topological domain" description="Cytoplasmic" evidence="1">
    <location>
        <begin position="257"/>
        <end position="286"/>
    </location>
</feature>
<feature type="transmembrane region" description="Helical" evidence="2">
    <location>
        <begin position="287"/>
        <end position="307"/>
    </location>
</feature>
<feature type="topological domain" description="Periplasmic" evidence="1">
    <location>
        <begin position="308"/>
        <end position="314"/>
    </location>
</feature>
<feature type="transmembrane region" description="Helical" evidence="2">
    <location>
        <begin position="315"/>
        <end position="335"/>
    </location>
</feature>
<feature type="topological domain" description="Cytoplasmic" evidence="1">
    <location>
        <begin position="336"/>
        <end position="396"/>
    </location>
</feature>
<feature type="transmembrane region" description="Helical" evidence="2">
    <location>
        <begin position="397"/>
        <end position="417"/>
    </location>
</feature>
<feature type="topological domain" description="Periplasmic" evidence="1">
    <location>
        <begin position="418"/>
        <end position="562"/>
    </location>
</feature>
<feature type="transmembrane region" description="Helical" evidence="2">
    <location>
        <begin position="563"/>
        <end position="583"/>
    </location>
</feature>
<feature type="topological domain" description="Cytoplasmic" evidence="1">
    <location>
        <begin position="584"/>
        <end position="586"/>
    </location>
</feature>
<feature type="transmembrane region" description="Helical" evidence="2">
    <location>
        <begin position="587"/>
        <end position="607"/>
    </location>
</feature>
<feature type="topological domain" description="Periplasmic" evidence="1">
    <location>
        <begin position="608"/>
        <end position="616"/>
    </location>
</feature>
<feature type="transmembrane region" description="Helical" evidence="2">
    <location>
        <begin position="617"/>
        <end position="637"/>
    </location>
</feature>
<feature type="topological domain" description="Cytoplasmic" evidence="1">
    <location>
        <begin position="638"/>
        <end position="672"/>
    </location>
</feature>
<feature type="transmembrane region" description="Helical" evidence="2">
    <location>
        <begin position="673"/>
        <end position="693"/>
    </location>
</feature>
<feature type="topological domain" description="Periplasmic" evidence="1">
    <location>
        <begin position="694"/>
        <end position="698"/>
    </location>
</feature>
<feature type="transmembrane region" description="Helical" evidence="2">
    <location>
        <begin position="699"/>
        <end position="719"/>
    </location>
</feature>
<feature type="topological domain" description="Cytoplasmic" evidence="1">
    <location>
        <begin position="720"/>
        <end position="944"/>
    </location>
</feature>
<feature type="region of interest" description="Disordered" evidence="3">
    <location>
        <begin position="778"/>
        <end position="944"/>
    </location>
</feature>
<feature type="compositionally biased region" description="Low complexity" evidence="3">
    <location>
        <begin position="791"/>
        <end position="828"/>
    </location>
</feature>
<feature type="compositionally biased region" description="Polar residues" evidence="3">
    <location>
        <begin position="829"/>
        <end position="839"/>
    </location>
</feature>
<feature type="compositionally biased region" description="Pro residues" evidence="3">
    <location>
        <begin position="855"/>
        <end position="866"/>
    </location>
</feature>
<feature type="binding site" evidence="1">
    <location>
        <begin position="40"/>
        <end position="44"/>
    </location>
    <ligand>
        <name>a 1,2-diacylglycero-3-phosphoethanolamine</name>
        <dbReference type="ChEBI" id="CHEBI:57613"/>
    </ligand>
</feature>
<feature type="site" description="Part of the proton-transportation channel" evidence="1">
    <location>
        <position position="251"/>
    </location>
</feature>
<feature type="site" description="Part of the proton-transportation channel" evidence="1">
    <location>
        <position position="252"/>
    </location>
</feature>
<feature type="site" description="Part of the proton transportation network" evidence="1">
    <location>
        <position position="586"/>
    </location>
</feature>
<feature type="site" description="Part of the proton-transportation channel" evidence="1">
    <location>
        <position position="640"/>
    </location>
</feature>
<feature type="site" description="Part of the proton-transportation channel" evidence="1">
    <location>
        <position position="641"/>
    </location>
</feature>
<feature type="site" description="Part of the proton transportation network" evidence="1">
    <location>
        <position position="642"/>
    </location>
</feature>
<feature type="mutagenesis site" description="Confers resistance to SQ109." evidence="5">
    <original>Q</original>
    <variation>R</variation>
    <location>
        <position position="40"/>
    </location>
</feature>
<feature type="mutagenesis site" description="Confers resistance to C215." evidence="7">
    <original>V</original>
    <variation>A</variation>
    <location>
        <position position="51"/>
    </location>
</feature>
<feature type="mutagenesis site" description="Confers resistance to BM212." evidence="4">
    <original>L</original>
    <variation>S</variation>
    <location>
        <position position="215"/>
    </location>
</feature>
<feature type="mutagenesis site" description="Increases resistance to AU1235." evidence="6">
    <original>G</original>
    <variation>E</variation>
    <location>
        <position position="253"/>
    </location>
</feature>
<feature type="mutagenesis site" description="Confers resistance to indoleamides." evidence="9">
    <original>S</original>
    <variation>T</variation>
    <location>
        <position position="288"/>
    </location>
</feature>
<feature type="mutagenesis site" description="Confers resistance to C215." evidence="7">
    <original>L</original>
    <variation>P</variation>
    <location>
        <position position="320"/>
    </location>
</feature>
<feature type="mutagenesis site" description="Confers resistance to SQ109." evidence="5">
    <original>L</original>
    <variation>P</variation>
    <location>
        <position position="567"/>
    </location>
</feature>
<feature type="mutagenesis site" description="Confers resistance to C215." evidence="7">
    <original>T</original>
    <variation>A</variation>
    <location>
        <position position="667"/>
    </location>
</feature>
<feature type="mutagenesis site" description="Confers resistance to C215." evidence="7">
    <original>V</original>
    <variation>A</variation>
    <location>
        <position position="684"/>
    </location>
</feature>
<feature type="mutagenesis site" description="Confers resistance to SQ109." evidence="5">
    <original>A</original>
    <variation>T</variation>
    <location>
        <position position="700"/>
    </location>
</feature>
<feature type="helix" evidence="13">
    <location>
        <begin position="2"/>
        <end position="11"/>
    </location>
</feature>
<feature type="turn" evidence="13">
    <location>
        <begin position="15"/>
        <end position="21"/>
    </location>
</feature>
<feature type="helix" evidence="13">
    <location>
        <begin position="22"/>
        <end position="25"/>
    </location>
</feature>
<feature type="turn" evidence="13">
    <location>
        <begin position="26"/>
        <end position="28"/>
    </location>
</feature>
<feature type="helix" evidence="13">
    <location>
        <begin position="31"/>
        <end position="33"/>
    </location>
</feature>
<feature type="helix" evidence="13">
    <location>
        <begin position="34"/>
        <end position="37"/>
    </location>
</feature>
<feature type="strand" evidence="13">
    <location>
        <begin position="38"/>
        <end position="40"/>
    </location>
</feature>
<feature type="strand" evidence="13">
    <location>
        <begin position="43"/>
        <end position="45"/>
    </location>
</feature>
<feature type="helix" evidence="13">
    <location>
        <begin position="49"/>
        <end position="61"/>
    </location>
</feature>
<feature type="strand" evidence="13">
    <location>
        <begin position="70"/>
        <end position="74"/>
    </location>
</feature>
<feature type="strand" evidence="13">
    <location>
        <begin position="76"/>
        <end position="79"/>
    </location>
</feature>
<feature type="helix" evidence="13">
    <location>
        <begin position="84"/>
        <end position="94"/>
    </location>
</feature>
<feature type="turn" evidence="13">
    <location>
        <begin position="95"/>
        <end position="97"/>
    </location>
</feature>
<feature type="strand" evidence="13">
    <location>
        <begin position="98"/>
        <end position="101"/>
    </location>
</feature>
<feature type="turn" evidence="13">
    <location>
        <begin position="102"/>
        <end position="104"/>
    </location>
</feature>
<feature type="turn" evidence="13">
    <location>
        <begin position="111"/>
        <end position="113"/>
    </location>
</feature>
<feature type="helix" evidence="13">
    <location>
        <begin position="118"/>
        <end position="120"/>
    </location>
</feature>
<feature type="strand" evidence="13">
    <location>
        <begin position="127"/>
        <end position="131"/>
    </location>
</feature>
<feature type="helix" evidence="13">
    <location>
        <begin position="139"/>
        <end position="147"/>
    </location>
</feature>
<feature type="helix" evidence="13">
    <location>
        <begin position="150"/>
        <end position="153"/>
    </location>
</feature>
<feature type="helix" evidence="13">
    <location>
        <begin position="156"/>
        <end position="158"/>
    </location>
</feature>
<feature type="strand" evidence="13">
    <location>
        <begin position="162"/>
        <end position="165"/>
    </location>
</feature>
<feature type="helix" evidence="13">
    <location>
        <begin position="166"/>
        <end position="174"/>
    </location>
</feature>
<feature type="helix" evidence="13">
    <location>
        <begin position="176"/>
        <end position="200"/>
    </location>
</feature>
<feature type="helix" evidence="13">
    <location>
        <begin position="203"/>
        <end position="227"/>
    </location>
</feature>
<feature type="turn" evidence="13">
    <location>
        <begin position="228"/>
        <end position="230"/>
    </location>
</feature>
<feature type="helix" evidence="13">
    <location>
        <begin position="237"/>
        <end position="246"/>
    </location>
</feature>
<feature type="helix" evidence="13">
    <location>
        <begin position="248"/>
        <end position="265"/>
    </location>
</feature>
<feature type="helix" evidence="13">
    <location>
        <begin position="270"/>
        <end position="297"/>
    </location>
</feature>
<feature type="helix" evidence="13">
    <location>
        <begin position="298"/>
        <end position="301"/>
    </location>
</feature>
<feature type="helix" evidence="13">
    <location>
        <begin position="305"/>
        <end position="336"/>
    </location>
</feature>
<feature type="helix" evidence="13">
    <location>
        <begin position="337"/>
        <end position="340"/>
    </location>
</feature>
<feature type="helix" evidence="13">
    <location>
        <begin position="385"/>
        <end position="391"/>
    </location>
</feature>
<feature type="turn" evidence="13">
    <location>
        <begin position="392"/>
        <end position="394"/>
    </location>
</feature>
<feature type="turn" evidence="13">
    <location>
        <begin position="396"/>
        <end position="400"/>
    </location>
</feature>
<feature type="helix" evidence="13">
    <location>
        <begin position="401"/>
        <end position="408"/>
    </location>
</feature>
<feature type="turn" evidence="13">
    <location>
        <begin position="409"/>
        <end position="411"/>
    </location>
</feature>
<feature type="helix" evidence="13">
    <location>
        <begin position="412"/>
        <end position="415"/>
    </location>
</feature>
<feature type="helix" evidence="13">
    <location>
        <begin position="424"/>
        <end position="426"/>
    </location>
</feature>
<feature type="helix" evidence="13">
    <location>
        <begin position="434"/>
        <end position="443"/>
    </location>
</feature>
<feature type="strand" evidence="13">
    <location>
        <begin position="451"/>
        <end position="458"/>
    </location>
</feature>
<feature type="helix" evidence="13">
    <location>
        <begin position="466"/>
        <end position="476"/>
    </location>
</feature>
<feature type="strand" evidence="13">
    <location>
        <begin position="485"/>
        <end position="487"/>
    </location>
</feature>
<feature type="helix" evidence="13">
    <location>
        <begin position="489"/>
        <end position="491"/>
    </location>
</feature>
<feature type="strand" evidence="13">
    <location>
        <begin position="492"/>
        <end position="495"/>
    </location>
</feature>
<feature type="strand" evidence="13">
    <location>
        <begin position="508"/>
        <end position="517"/>
    </location>
</feature>
<feature type="helix" evidence="13">
    <location>
        <begin position="518"/>
        <end position="520"/>
    </location>
</feature>
<feature type="helix" evidence="13">
    <location>
        <begin position="521"/>
        <end position="528"/>
    </location>
</feature>
<feature type="strand" evidence="13">
    <location>
        <begin position="534"/>
        <end position="537"/>
    </location>
</feature>
<feature type="strand" evidence="13">
    <location>
        <begin position="540"/>
        <end position="543"/>
    </location>
</feature>
<feature type="helix" evidence="13">
    <location>
        <begin position="544"/>
        <end position="556"/>
    </location>
</feature>
<feature type="helix" evidence="13">
    <location>
        <begin position="559"/>
        <end position="577"/>
    </location>
</feature>
<feature type="helix" evidence="13">
    <location>
        <begin position="582"/>
        <end position="606"/>
    </location>
</feature>
<feature type="helix" evidence="13">
    <location>
        <begin position="612"/>
        <end position="615"/>
    </location>
</feature>
<feature type="helix" evidence="13">
    <location>
        <begin position="624"/>
        <end position="654"/>
    </location>
</feature>
<feature type="helix" evidence="13">
    <location>
        <begin position="659"/>
        <end position="669"/>
    </location>
</feature>
<feature type="helix" evidence="13">
    <location>
        <begin position="671"/>
        <end position="689"/>
    </location>
</feature>
<feature type="helix" evidence="13">
    <location>
        <begin position="694"/>
        <end position="712"/>
    </location>
</feature>
<feature type="helix" evidence="13">
    <location>
        <begin position="714"/>
        <end position="726"/>
    </location>
</feature>
<feature type="helix" evidence="13">
    <location>
        <begin position="728"/>
        <end position="731"/>
    </location>
</feature>
<feature type="helix" evidence="13">
    <location>
        <begin position="735"/>
        <end position="743"/>
    </location>
</feature>
<organism>
    <name type="scientific">Mycobacterium tuberculosis (strain ATCC 25618 / H37Rv)</name>
    <dbReference type="NCBI Taxonomy" id="83332"/>
    <lineage>
        <taxon>Bacteria</taxon>
        <taxon>Bacillati</taxon>
        <taxon>Actinomycetota</taxon>
        <taxon>Actinomycetes</taxon>
        <taxon>Mycobacteriales</taxon>
        <taxon>Mycobacteriaceae</taxon>
        <taxon>Mycobacterium</taxon>
        <taxon>Mycobacterium tuberculosis complex</taxon>
    </lineage>
</organism>
<dbReference type="EMBL" id="AL123456">
    <property type="protein sequence ID" value="CCP42934.1"/>
    <property type="molecule type" value="Genomic_DNA"/>
</dbReference>
<dbReference type="PIR" id="C70839">
    <property type="entry name" value="C70839"/>
</dbReference>
<dbReference type="RefSeq" id="NP_214720.1">
    <property type="nucleotide sequence ID" value="NC_000962.3"/>
</dbReference>
<dbReference type="RefSeq" id="WP_003899855.1">
    <property type="nucleotide sequence ID" value="NZ_NVQJ01000001.1"/>
</dbReference>
<dbReference type="PDB" id="7NVH">
    <property type="method" value="EM"/>
    <property type="resolution" value="3.02 A"/>
    <property type="chains" value="A=1-753"/>
</dbReference>
<dbReference type="PDBsum" id="7NVH"/>
<dbReference type="EMDB" id="EMD-12604"/>
<dbReference type="SMR" id="P9WJV5"/>
<dbReference type="STRING" id="83332.Rv0206c"/>
<dbReference type="PaxDb" id="83332-Rv0206c"/>
<dbReference type="DNASU" id="886752"/>
<dbReference type="GeneID" id="886752"/>
<dbReference type="KEGG" id="mtu:Rv0206c"/>
<dbReference type="KEGG" id="mtv:RVBD_0206c"/>
<dbReference type="TubercuList" id="Rv0206c"/>
<dbReference type="eggNOG" id="COG2409">
    <property type="taxonomic scope" value="Bacteria"/>
</dbReference>
<dbReference type="InParanoid" id="P9WJV5"/>
<dbReference type="OrthoDB" id="7051771at2"/>
<dbReference type="PhylomeDB" id="P9WJV5"/>
<dbReference type="Proteomes" id="UP000001584">
    <property type="component" value="Chromosome"/>
</dbReference>
<dbReference type="GO" id="GO:0030428">
    <property type="term" value="C:cell septum"/>
    <property type="evidence" value="ECO:0000250"/>
    <property type="project" value="UniProtKB"/>
</dbReference>
<dbReference type="GO" id="GO:0051286">
    <property type="term" value="C:cell tip"/>
    <property type="evidence" value="ECO:0000250"/>
    <property type="project" value="UniProtKB"/>
</dbReference>
<dbReference type="GO" id="GO:0009274">
    <property type="term" value="C:peptidoglycan-based cell wall"/>
    <property type="evidence" value="ECO:0007005"/>
    <property type="project" value="MTBBASE"/>
</dbReference>
<dbReference type="GO" id="GO:0005886">
    <property type="term" value="C:plasma membrane"/>
    <property type="evidence" value="ECO:0007005"/>
    <property type="project" value="MTBBASE"/>
</dbReference>
<dbReference type="GO" id="GO:1901612">
    <property type="term" value="F:cardiolipin binding"/>
    <property type="evidence" value="ECO:0000250"/>
    <property type="project" value="UniProtKB"/>
</dbReference>
<dbReference type="GO" id="GO:0019992">
    <property type="term" value="F:diacylglycerol binding"/>
    <property type="evidence" value="ECO:0000250"/>
    <property type="project" value="UniProtKB"/>
</dbReference>
<dbReference type="GO" id="GO:0008429">
    <property type="term" value="F:phosphatidylethanolamine binding"/>
    <property type="evidence" value="ECO:0000250"/>
    <property type="project" value="UniProtKB"/>
</dbReference>
<dbReference type="GO" id="GO:1901611">
    <property type="term" value="F:phosphatidylglycerol binding"/>
    <property type="evidence" value="ECO:0000250"/>
    <property type="project" value="UniProtKB"/>
</dbReference>
<dbReference type="GO" id="GO:0035091">
    <property type="term" value="F:phosphatidylinositol binding"/>
    <property type="evidence" value="ECO:0000250"/>
    <property type="project" value="UniProtKB"/>
</dbReference>
<dbReference type="GO" id="GO:0071766">
    <property type="term" value="P:Actinobacterium-type cell wall biogenesis"/>
    <property type="evidence" value="ECO:0000314"/>
    <property type="project" value="MTBBASE"/>
</dbReference>
<dbReference type="GO" id="GO:0071555">
    <property type="term" value="P:cell wall organization"/>
    <property type="evidence" value="ECO:0007669"/>
    <property type="project" value="UniProtKB-KW"/>
</dbReference>
<dbReference type="GO" id="GO:0015920">
    <property type="term" value="P:lipopolysaccharide transport"/>
    <property type="evidence" value="ECO:0000314"/>
    <property type="project" value="MTBBASE"/>
</dbReference>
<dbReference type="GO" id="GO:0071768">
    <property type="term" value="P:mycolic acid biosynthetic process"/>
    <property type="evidence" value="ECO:0000250"/>
    <property type="project" value="UniProtKB"/>
</dbReference>
<dbReference type="GO" id="GO:0042391">
    <property type="term" value="P:regulation of membrane potential"/>
    <property type="evidence" value="ECO:0000250"/>
    <property type="project" value="UniProtKB"/>
</dbReference>
<dbReference type="GO" id="GO:0046677">
    <property type="term" value="P:response to antibiotic"/>
    <property type="evidence" value="ECO:0000250"/>
    <property type="project" value="UniProtKB"/>
</dbReference>
<dbReference type="Gene3D" id="1.20.1640.10">
    <property type="entry name" value="Multidrug efflux transporter AcrB transmembrane domain"/>
    <property type="match status" value="2"/>
</dbReference>
<dbReference type="InterPro" id="IPR004869">
    <property type="entry name" value="MMPL_dom"/>
</dbReference>
<dbReference type="InterPro" id="IPR050545">
    <property type="entry name" value="Mycobact_MmpL"/>
</dbReference>
<dbReference type="InterPro" id="IPR000731">
    <property type="entry name" value="SSD"/>
</dbReference>
<dbReference type="PANTHER" id="PTHR33406">
    <property type="entry name" value="MEMBRANE PROTEIN MJ1562-RELATED"/>
    <property type="match status" value="1"/>
</dbReference>
<dbReference type="PANTHER" id="PTHR33406:SF11">
    <property type="entry name" value="MEMBRANE PROTEIN SCO6666-RELATED"/>
    <property type="match status" value="1"/>
</dbReference>
<dbReference type="Pfam" id="PF03176">
    <property type="entry name" value="MMPL"/>
    <property type="match status" value="2"/>
</dbReference>
<dbReference type="SUPFAM" id="SSF82866">
    <property type="entry name" value="Multidrug efflux transporter AcrB transmembrane domain"/>
    <property type="match status" value="2"/>
</dbReference>
<dbReference type="PROSITE" id="PS50156">
    <property type="entry name" value="SSD"/>
    <property type="match status" value="1"/>
</dbReference>
<accession>P9WJV5</accession>
<accession>L0T2U3</accession>
<accession>O53657</accession>
<evidence type="ECO:0000250" key="1">
    <source>
        <dbReference type="UniProtKB" id="A0QP27"/>
    </source>
</evidence>
<evidence type="ECO:0000255" key="2"/>
<evidence type="ECO:0000256" key="3">
    <source>
        <dbReference type="SAM" id="MobiDB-lite"/>
    </source>
</evidence>
<evidence type="ECO:0000269" key="4">
    <source>
    </source>
</evidence>
<evidence type="ECO:0000269" key="5">
    <source>
    </source>
</evidence>
<evidence type="ECO:0000269" key="6">
    <source>
    </source>
</evidence>
<evidence type="ECO:0000269" key="7">
    <source>
    </source>
</evidence>
<evidence type="ECO:0000269" key="8">
    <source>
    </source>
</evidence>
<evidence type="ECO:0000269" key="9">
    <source>
    </source>
</evidence>
<evidence type="ECO:0000269" key="10">
    <source>
    </source>
</evidence>
<evidence type="ECO:0000305" key="11"/>
<evidence type="ECO:0000305" key="12">
    <source>
    </source>
</evidence>
<evidence type="ECO:0007829" key="13">
    <source>
        <dbReference type="PDB" id="7NVH"/>
    </source>
</evidence>